<comment type="function">
    <text evidence="2 9 10">Mediates electroneutral sodium- and carbonate-dependent chloride-HCO3(-) exchange with a Na(+):HCO3(-) stoichiometry of 2:1 (PubMed:34584093, PubMed:8189393). Plays a major role in pH regulation in neurons (PubMed:8189393). Mediates sodium reabsorption in the renal cortical collecting ducts (By similarity).</text>
</comment>
<comment type="catalytic activity">
    <reaction evidence="9 10">
        <text>2 hydrogencarbonate(out) + chloride(in) + Na(+)(out) = 2 hydrogencarbonate(in) + chloride(out) + Na(+)(in)</text>
        <dbReference type="Rhea" id="RHEA:72739"/>
        <dbReference type="ChEBI" id="CHEBI:17544"/>
        <dbReference type="ChEBI" id="CHEBI:17996"/>
        <dbReference type="ChEBI" id="CHEBI:29101"/>
    </reaction>
</comment>
<comment type="subunit">
    <text evidence="9">Homodimer.</text>
</comment>
<comment type="subcellular location">
    <subcellularLocation>
        <location evidence="6 9">Cell membrane</location>
        <topology evidence="3">Multi-pass membrane protein</topology>
    </subcellularLocation>
    <subcellularLocation>
        <location evidence="1">Apical cell membrane</location>
        <topology evidence="3">Multi-pass membrane protein</topology>
    </subcellularLocation>
    <subcellularLocation>
        <location evidence="6 7">Basolateral cell membrane</location>
        <topology evidence="3">Multi-pass membrane protein</topology>
    </subcellularLocation>
    <subcellularLocation>
        <location evidence="8">Cytoplasmic vesicle</location>
        <location evidence="8">Secretory vesicle</location>
        <location evidence="8">Synaptic vesicle membrane</location>
        <topology evidence="3">Multi-pass membrane protein</topology>
    </subcellularLocation>
</comment>
<comment type="alternative products">
    <event type="alternative splicing"/>
    <isoform>
        <id>Q6RVG2-2</id>
        <name>1</name>
        <sequence type="displayed"/>
    </isoform>
    <isoform>
        <id>Q6RVG2-1</id>
        <name>2</name>
        <name>NDCBE1-B</name>
        <sequence type="described" ref="VSP_061719"/>
    </isoform>
    <isoform>
        <id>Q6RVG2-3</id>
        <name>3</name>
        <name>NDCBE1-A</name>
        <sequence type="described" ref="VSP_061720 VSP_061721"/>
    </isoform>
    <isoform>
        <id>Q6RVG2-4</id>
        <name>4</name>
        <name>NDCBE1-C</name>
        <sequence type="described" ref="VSP_061719 VSP_061720"/>
    </isoform>
</comment>
<comment type="tissue specificity">
    <text evidence="5 6 7 8">Expressed in the Purkinje cells and dendrites in the molecular layer of the cerebellum (at protein level). Expressed in the hippocampal neurons (at protein level). Strong expression observed in testis and moderate expression in kidney inner medulla, the submandibular gland, eye, cerebrum and cerebellum.</text>
</comment>
<comment type="induction">
    <text evidence="7">Up-regulated in the brain in response to chronic metabolic acidosis.</text>
</comment>
<comment type="similarity">
    <text evidence="3">Belongs to the anion exchanger (TC 2.A.31) family.</text>
</comment>
<evidence type="ECO:0000250" key="1">
    <source>
        <dbReference type="UniProtKB" id="Q2Y0W8"/>
    </source>
</evidence>
<evidence type="ECO:0000250" key="2">
    <source>
        <dbReference type="UniProtKB" id="Q8JZR6"/>
    </source>
</evidence>
<evidence type="ECO:0000255" key="3"/>
<evidence type="ECO:0000256" key="4">
    <source>
        <dbReference type="SAM" id="MobiDB-lite"/>
    </source>
</evidence>
<evidence type="ECO:0000269" key="5">
    <source>
    </source>
</evidence>
<evidence type="ECO:0000269" key="6">
    <source>
    </source>
</evidence>
<evidence type="ECO:0000269" key="7">
    <source>
    </source>
</evidence>
<evidence type="ECO:0000269" key="8">
    <source>
    </source>
</evidence>
<evidence type="ECO:0000269" key="9">
    <source>
    </source>
</evidence>
<evidence type="ECO:0000269" key="10">
    <source>
    </source>
</evidence>
<evidence type="ECO:0000303" key="11">
    <source ref="1"/>
</evidence>
<evidence type="ECO:0000305" key="12"/>
<evidence type="ECO:0000305" key="13">
    <source>
    </source>
</evidence>
<evidence type="ECO:0000312" key="14">
    <source>
        <dbReference type="EMBL" id="AAR37054.1"/>
    </source>
</evidence>
<evidence type="ECO:0000312" key="15">
    <source>
        <dbReference type="RGD" id="735164"/>
    </source>
</evidence>
<evidence type="ECO:0007744" key="16">
    <source>
        <dbReference type="PDB" id="7RTM"/>
    </source>
</evidence>
<evidence type="ECO:0007829" key="17">
    <source>
        <dbReference type="PDB" id="7RTM"/>
    </source>
</evidence>
<proteinExistence type="evidence at protein level"/>
<reference evidence="12 14 15" key="1">
    <citation type="submission" date="2003-11" db="EMBL/GenBank/DDBJ databases">
        <title>Rat sodium-driven Cl-HCO3 exchanger.</title>
        <authorList>
            <person name="Attmane-Elakeb A."/>
            <person name="Vernimmen C."/>
            <person name="Karim Z."/>
            <person name="Bichara M.M."/>
        </authorList>
    </citation>
    <scope>NUCLEOTIDE SEQUENCE [MRNA] (ISOFORMS 2; 3 AND 4)</scope>
    <source>
        <strain>Sprague-Dawley</strain>
        <tissue>Kidney inner medulla</tissue>
    </source>
</reference>
<reference key="2">
    <citation type="journal article" date="2004" name="Nature">
        <title>Genome sequence of the Brown Norway rat yields insights into mammalian evolution.</title>
        <authorList>
            <person name="Gibbs R.A."/>
            <person name="Weinstock G.M."/>
            <person name="Metzker M.L."/>
            <person name="Muzny D.M."/>
            <person name="Sodergren E.J."/>
            <person name="Scherer S."/>
            <person name="Scott G."/>
            <person name="Steffen D."/>
            <person name="Worley K.C."/>
            <person name="Burch P.E."/>
            <person name="Okwuonu G."/>
            <person name="Hines S."/>
            <person name="Lewis L."/>
            <person name="Deramo C."/>
            <person name="Delgado O."/>
            <person name="Dugan-Rocha S."/>
            <person name="Miner G."/>
            <person name="Morgan M."/>
            <person name="Hawes A."/>
            <person name="Gill R."/>
            <person name="Holt R.A."/>
            <person name="Adams M.D."/>
            <person name="Amanatides P.G."/>
            <person name="Baden-Tillson H."/>
            <person name="Barnstead M."/>
            <person name="Chin S."/>
            <person name="Evans C.A."/>
            <person name="Ferriera S."/>
            <person name="Fosler C."/>
            <person name="Glodek A."/>
            <person name="Gu Z."/>
            <person name="Jennings D."/>
            <person name="Kraft C.L."/>
            <person name="Nguyen T."/>
            <person name="Pfannkoch C.M."/>
            <person name="Sitter C."/>
            <person name="Sutton G.G."/>
            <person name="Venter J.C."/>
            <person name="Woodage T."/>
            <person name="Smith D."/>
            <person name="Lee H.-M."/>
            <person name="Gustafson E."/>
            <person name="Cahill P."/>
            <person name="Kana A."/>
            <person name="Doucette-Stamm L."/>
            <person name="Weinstock K."/>
            <person name="Fechtel K."/>
            <person name="Weiss R.B."/>
            <person name="Dunn D.M."/>
            <person name="Green E.D."/>
            <person name="Blakesley R.W."/>
            <person name="Bouffard G.G."/>
            <person name="De Jong P.J."/>
            <person name="Osoegawa K."/>
            <person name="Zhu B."/>
            <person name="Marra M."/>
            <person name="Schein J."/>
            <person name="Bosdet I."/>
            <person name="Fjell C."/>
            <person name="Jones S."/>
            <person name="Krzywinski M."/>
            <person name="Mathewson C."/>
            <person name="Siddiqui A."/>
            <person name="Wye N."/>
            <person name="McPherson J."/>
            <person name="Zhao S."/>
            <person name="Fraser C.M."/>
            <person name="Shetty J."/>
            <person name="Shatsman S."/>
            <person name="Geer K."/>
            <person name="Chen Y."/>
            <person name="Abramzon S."/>
            <person name="Nierman W.C."/>
            <person name="Havlak P.H."/>
            <person name="Chen R."/>
            <person name="Durbin K.J."/>
            <person name="Egan A."/>
            <person name="Ren Y."/>
            <person name="Song X.-Z."/>
            <person name="Li B."/>
            <person name="Liu Y."/>
            <person name="Qin X."/>
            <person name="Cawley S."/>
            <person name="Cooney A.J."/>
            <person name="D'Souza L.M."/>
            <person name="Martin K."/>
            <person name="Wu J.Q."/>
            <person name="Gonzalez-Garay M.L."/>
            <person name="Jackson A.R."/>
            <person name="Kalafus K.J."/>
            <person name="McLeod M.P."/>
            <person name="Milosavljevic A."/>
            <person name="Virk D."/>
            <person name="Volkov A."/>
            <person name="Wheeler D.A."/>
            <person name="Zhang Z."/>
            <person name="Bailey J.A."/>
            <person name="Eichler E.E."/>
            <person name="Tuzun E."/>
            <person name="Birney E."/>
            <person name="Mongin E."/>
            <person name="Ureta-Vidal A."/>
            <person name="Woodwark C."/>
            <person name="Zdobnov E."/>
            <person name="Bork P."/>
            <person name="Suyama M."/>
            <person name="Torrents D."/>
            <person name="Alexandersson M."/>
            <person name="Trask B.J."/>
            <person name="Young J.M."/>
            <person name="Huang H."/>
            <person name="Wang H."/>
            <person name="Xing H."/>
            <person name="Daniels S."/>
            <person name="Gietzen D."/>
            <person name="Schmidt J."/>
            <person name="Stevens K."/>
            <person name="Vitt U."/>
            <person name="Wingrove J."/>
            <person name="Camara F."/>
            <person name="Mar Alba M."/>
            <person name="Abril J.F."/>
            <person name="Guigo R."/>
            <person name="Smit A."/>
            <person name="Dubchak I."/>
            <person name="Rubin E.M."/>
            <person name="Couronne O."/>
            <person name="Poliakov A."/>
            <person name="Huebner N."/>
            <person name="Ganten D."/>
            <person name="Goesele C."/>
            <person name="Hummel O."/>
            <person name="Kreitler T."/>
            <person name="Lee Y.-A."/>
            <person name="Monti J."/>
            <person name="Schulz H."/>
            <person name="Zimdahl H."/>
            <person name="Himmelbauer H."/>
            <person name="Lehrach H."/>
            <person name="Jacob H.J."/>
            <person name="Bromberg S."/>
            <person name="Gullings-Handley J."/>
            <person name="Jensen-Seaman M.I."/>
            <person name="Kwitek A.E."/>
            <person name="Lazar J."/>
            <person name="Pasko D."/>
            <person name="Tonellato P.J."/>
            <person name="Twigger S."/>
            <person name="Ponting C.P."/>
            <person name="Duarte J.M."/>
            <person name="Rice S."/>
            <person name="Goodstadt L."/>
            <person name="Beatson S.A."/>
            <person name="Emes R.D."/>
            <person name="Winter E.E."/>
            <person name="Webber C."/>
            <person name="Brandt P."/>
            <person name="Nyakatura G."/>
            <person name="Adetobi M."/>
            <person name="Chiaromonte F."/>
            <person name="Elnitski L."/>
            <person name="Eswara P."/>
            <person name="Hardison R.C."/>
            <person name="Hou M."/>
            <person name="Kolbe D."/>
            <person name="Makova K."/>
            <person name="Miller W."/>
            <person name="Nekrutenko A."/>
            <person name="Riemer C."/>
            <person name="Schwartz S."/>
            <person name="Taylor J."/>
            <person name="Yang S."/>
            <person name="Zhang Y."/>
            <person name="Lindpaintner K."/>
            <person name="Andrews T.D."/>
            <person name="Caccamo M."/>
            <person name="Clamp M."/>
            <person name="Clarke L."/>
            <person name="Curwen V."/>
            <person name="Durbin R.M."/>
            <person name="Eyras E."/>
            <person name="Searle S.M."/>
            <person name="Cooper G.M."/>
            <person name="Batzoglou S."/>
            <person name="Brudno M."/>
            <person name="Sidow A."/>
            <person name="Stone E.A."/>
            <person name="Payseur B.A."/>
            <person name="Bourque G."/>
            <person name="Lopez-Otin C."/>
            <person name="Puente X.S."/>
            <person name="Chakrabarti K."/>
            <person name="Chatterji S."/>
            <person name="Dewey C."/>
            <person name="Pachter L."/>
            <person name="Bray N."/>
            <person name="Yap V.B."/>
            <person name="Caspi A."/>
            <person name="Tesler G."/>
            <person name="Pevzner P.A."/>
            <person name="Haussler D."/>
            <person name="Roskin K.M."/>
            <person name="Baertsch R."/>
            <person name="Clawson H."/>
            <person name="Furey T.S."/>
            <person name="Hinrichs A.S."/>
            <person name="Karolchik D."/>
            <person name="Kent W.J."/>
            <person name="Rosenbloom K.R."/>
            <person name="Trumbower H."/>
            <person name="Weirauch M."/>
            <person name="Cooper D.N."/>
            <person name="Stenson P.D."/>
            <person name="Ma B."/>
            <person name="Brent M."/>
            <person name="Arumugam M."/>
            <person name="Shteynberg D."/>
            <person name="Copley R.R."/>
            <person name="Taylor M.S."/>
            <person name="Riethman H."/>
            <person name="Mudunuri U."/>
            <person name="Peterson J."/>
            <person name="Guyer M."/>
            <person name="Felsenfeld A."/>
            <person name="Old S."/>
            <person name="Mockrin S."/>
            <person name="Collins F.S."/>
        </authorList>
    </citation>
    <scope>NUCLEOTIDE SEQUENCE [LARGE SCALE GENOMIC DNA]</scope>
    <source>
        <strain>Brown Norway</strain>
    </source>
</reference>
<reference key="3">
    <citation type="journal article" date="1994" name="J. Physiol. (Lond.)">
        <title>Regulation of intracellular pH in pyramidal neurones from the rat hippocampus by Na(+)-dependent Cl(-)-HCO3- exchange.</title>
        <authorList>
            <person name="Schwiening C.J."/>
            <person name="Boron W.F."/>
        </authorList>
    </citation>
    <scope>FUNCTION</scope>
    <scope>TRANSPORTER ACTIVITY</scope>
</reference>
<reference evidence="12" key="4">
    <citation type="journal article" date="2007" name="Am. J. Physiol.">
        <title>Molecular expression of SLC4-derived Na+-dependent anion transporters in selected human tissues.</title>
        <authorList>
            <person name="Damkier H.H."/>
            <person name="Nielsen S."/>
            <person name="Praetorius J."/>
        </authorList>
    </citation>
    <scope>TISSUE SPECIFICITY</scope>
</reference>
<reference key="5">
    <citation type="journal article" date="2008" name="Neuroscience">
        <title>Expression and localization of Na-driven Cl-HCO(3)(-) exchanger (SLC4A8) in rodent CNS.</title>
        <authorList>
            <person name="Chen L.M."/>
            <person name="Kelly M.L."/>
            <person name="Parker M.D."/>
            <person name="Bouyer P."/>
            <person name="Gill H.S."/>
            <person name="Felie J.M."/>
            <person name="Davis B.A."/>
            <person name="Boron W.F."/>
        </authorList>
    </citation>
    <scope>SUBCELLULAR LOCATION</scope>
    <scope>TISSUE SPECIFICITY</scope>
</reference>
<reference key="6">
    <citation type="journal article" date="2011" name="Brain Res.">
        <title>The sodium-driven chloride/bicarbonate exchanger NDCBE in rat brain is upregulated by chronic metabolic acidosis.</title>
        <authorList>
            <person name="Lee H.J."/>
            <person name="Park H.J."/>
            <person name="Lee S."/>
            <person name="Kim Y.H."/>
            <person name="Choi I."/>
        </authorList>
    </citation>
    <scope>INDUCTION</scope>
    <scope>SUBCELLULAR LOCATION</scope>
    <scope>TISSUE SPECIFICITY</scope>
</reference>
<reference key="7">
    <citation type="journal article" date="2012" name="J. Comp. Neurol.">
        <title>The sodium-driven chloride/bicarbonate exchanger in presynaptic terminals.</title>
        <authorList>
            <person name="Burette A.C."/>
            <person name="Weinberg R.J."/>
            <person name="Sassani P."/>
            <person name="Abuladze N."/>
            <person name="Kao L."/>
            <person name="Kurtz I."/>
        </authorList>
    </citation>
    <scope>SUBCELLULAR LOCATION</scope>
    <scope>TISSUE SPECIFICITY</scope>
</reference>
<reference key="8">
    <citation type="journal article" date="2021" name="Nat. Commun.">
        <title>Cryo-EM structure of the sodium-driven chloride/bicarbonate exchanger NDCBE.</title>
        <authorList>
            <person name="Wang W."/>
            <person name="Tsirulnikov K."/>
            <person name="Zhekova H.R."/>
            <person name="Kayik G."/>
            <person name="Khan H.M."/>
            <person name="Azimov R."/>
            <person name="Abuladze N."/>
            <person name="Kao L."/>
            <person name="Newman D."/>
            <person name="Noskov S.Y."/>
            <person name="Zhou Z.H."/>
            <person name="Pushkin A."/>
            <person name="Kurtz I."/>
        </authorList>
    </citation>
    <scope>STRUCTURE BY ELECTRON MICROSCOPY (3.40 ANGSTROMS) OF 451-1021</scope>
    <scope>FUNCTION</scope>
    <scope>TRANSPORTER ACTIVITY</scope>
    <scope>SUBUNIT</scope>
    <scope>SUBCELLULAR LOCATION</scope>
    <scope>MUTAGENESIS OF PRO-492; PHE-496; GLY-536; THR-538; GLY-539; PRO-540; GLU-608; LYS-612; ASP-800; THR-804; ALA-845; ALA-846; THR-847; VAL-848; THR-852; ARG-879; MET-914 AND LYS-970</scope>
    <scope>DISULFIDE BOND</scope>
    <scope>GLYCOSYLATION AT ASN-646 AND ASN-666</scope>
</reference>
<dbReference type="EMBL" id="AY489024">
    <property type="protein sequence ID" value="AAR37053.1"/>
    <property type="molecule type" value="mRNA"/>
</dbReference>
<dbReference type="EMBL" id="AY489025">
    <property type="protein sequence ID" value="AAR37054.1"/>
    <property type="molecule type" value="mRNA"/>
</dbReference>
<dbReference type="EMBL" id="AY489026">
    <property type="protein sequence ID" value="AAR37055.1"/>
    <property type="molecule type" value="mRNA"/>
</dbReference>
<dbReference type="RefSeq" id="NP_001257723.1">
    <molecule id="Q6RVG2-3"/>
    <property type="nucleotide sequence ID" value="NM_001270794.3"/>
</dbReference>
<dbReference type="RefSeq" id="NP_001257724.1">
    <molecule id="Q6RVG2-4"/>
    <property type="nucleotide sequence ID" value="NM_001270795.3"/>
</dbReference>
<dbReference type="RefSeq" id="NP_001401877.1">
    <molecule id="Q6RVG2-2"/>
    <property type="nucleotide sequence ID" value="NM_001414948.2"/>
</dbReference>
<dbReference type="RefSeq" id="NP_955791.1">
    <molecule id="Q6RVG2-1"/>
    <property type="nucleotide sequence ID" value="NM_199497.4"/>
</dbReference>
<dbReference type="RefSeq" id="XP_017450386.1">
    <property type="nucleotide sequence ID" value="XM_017594897.1"/>
</dbReference>
<dbReference type="PDB" id="7RTM">
    <property type="method" value="EM"/>
    <property type="resolution" value="3.40 A"/>
    <property type="chains" value="A/B=451-1021"/>
</dbReference>
<dbReference type="PDBsum" id="7RTM"/>
<dbReference type="EMDB" id="EMD-24683"/>
<dbReference type="SMR" id="Q6RVG2"/>
<dbReference type="FunCoup" id="Q6RVG2">
    <property type="interactions" value="2514"/>
</dbReference>
<dbReference type="STRING" id="10116.ENSRNOP00000043825"/>
<dbReference type="GlyGen" id="Q6RVG2">
    <property type="glycosylation" value="2 sites"/>
</dbReference>
<dbReference type="iPTMnet" id="Q6RVG2"/>
<dbReference type="PhosphoSitePlus" id="Q6RVG2"/>
<dbReference type="jPOST" id="Q6RVG2"/>
<dbReference type="PaxDb" id="10116-ENSRNOP00000043825"/>
<dbReference type="Ensembl" id="ENSRNOT00000040890.7">
    <molecule id="Q6RVG2-2"/>
    <property type="protein sequence ID" value="ENSRNOP00000043825.5"/>
    <property type="gene ID" value="ENSRNOG00000028879.7"/>
</dbReference>
<dbReference type="GeneID" id="315311"/>
<dbReference type="KEGG" id="rno:315311"/>
<dbReference type="UCSC" id="RGD:735164">
    <molecule id="Q6RVG2-2"/>
    <property type="organism name" value="rat"/>
</dbReference>
<dbReference type="AGR" id="RGD:735164"/>
<dbReference type="CTD" id="9498"/>
<dbReference type="RGD" id="735164">
    <property type="gene designation" value="Slc4a8"/>
</dbReference>
<dbReference type="VEuPathDB" id="HostDB:ENSRNOG00000028879"/>
<dbReference type="eggNOG" id="KOG1172">
    <property type="taxonomic scope" value="Eukaryota"/>
</dbReference>
<dbReference type="GeneTree" id="ENSGT00940000157422"/>
<dbReference type="InParanoid" id="Q6RVG2"/>
<dbReference type="OMA" id="SIEEISX"/>
<dbReference type="OrthoDB" id="1735926at2759"/>
<dbReference type="PhylomeDB" id="Q6RVG2"/>
<dbReference type="Reactome" id="R-RNO-425381">
    <property type="pathway name" value="Bicarbonate transporters"/>
</dbReference>
<dbReference type="PRO" id="PR:Q6RVG2"/>
<dbReference type="Proteomes" id="UP000002494">
    <property type="component" value="Chromosome 7"/>
</dbReference>
<dbReference type="Bgee" id="ENSRNOG00000028879">
    <property type="expression patterns" value="Expressed in frontal cortex and 9 other cell types or tissues"/>
</dbReference>
<dbReference type="ExpressionAtlas" id="Q6RVG2">
    <property type="expression patterns" value="baseline"/>
</dbReference>
<dbReference type="GO" id="GO:0016324">
    <property type="term" value="C:apical plasma membrane"/>
    <property type="evidence" value="ECO:0007669"/>
    <property type="project" value="UniProtKB-SubCell"/>
</dbReference>
<dbReference type="GO" id="GO:0032279">
    <property type="term" value="C:asymmetric synapse"/>
    <property type="evidence" value="ECO:0000314"/>
    <property type="project" value="ARUK-UCL"/>
</dbReference>
<dbReference type="GO" id="GO:0043679">
    <property type="term" value="C:axon terminus"/>
    <property type="evidence" value="ECO:0000314"/>
    <property type="project" value="ARUK-UCL"/>
</dbReference>
<dbReference type="GO" id="GO:0016323">
    <property type="term" value="C:basolateral plasma membrane"/>
    <property type="evidence" value="ECO:0000314"/>
    <property type="project" value="UniProtKB"/>
</dbReference>
<dbReference type="GO" id="GO:0030425">
    <property type="term" value="C:dendrite"/>
    <property type="evidence" value="ECO:0000266"/>
    <property type="project" value="RGD"/>
</dbReference>
<dbReference type="GO" id="GO:0097386">
    <property type="term" value="C:glial cell projection"/>
    <property type="evidence" value="ECO:0000314"/>
    <property type="project" value="ARUK-UCL"/>
</dbReference>
<dbReference type="GO" id="GO:0098978">
    <property type="term" value="C:glutamatergic synapse"/>
    <property type="evidence" value="ECO:0000314"/>
    <property type="project" value="ARUK-UCL"/>
</dbReference>
<dbReference type="GO" id="GO:0097457">
    <property type="term" value="C:hippocampal mossy fiber"/>
    <property type="evidence" value="ECO:0000314"/>
    <property type="project" value="ARUK-UCL"/>
</dbReference>
<dbReference type="GO" id="GO:0016020">
    <property type="term" value="C:membrane"/>
    <property type="evidence" value="ECO:0000266"/>
    <property type="project" value="RGD"/>
</dbReference>
<dbReference type="GO" id="GO:0043005">
    <property type="term" value="C:neuron projection"/>
    <property type="evidence" value="ECO:0000314"/>
    <property type="project" value="ARUK-UCL"/>
</dbReference>
<dbReference type="GO" id="GO:0032809">
    <property type="term" value="C:neuronal cell body membrane"/>
    <property type="evidence" value="ECO:0000266"/>
    <property type="project" value="RGD"/>
</dbReference>
<dbReference type="GO" id="GO:0005886">
    <property type="term" value="C:plasma membrane"/>
    <property type="evidence" value="ECO:0000314"/>
    <property type="project" value="UniProtKB"/>
</dbReference>
<dbReference type="GO" id="GO:0098793">
    <property type="term" value="C:presynapse"/>
    <property type="evidence" value="ECO:0000314"/>
    <property type="project" value="ARUK-UCL"/>
</dbReference>
<dbReference type="GO" id="GO:0042734">
    <property type="term" value="C:presynaptic membrane"/>
    <property type="evidence" value="ECO:0000266"/>
    <property type="project" value="RGD"/>
</dbReference>
<dbReference type="GO" id="GO:0032280">
    <property type="term" value="C:symmetric synapse"/>
    <property type="evidence" value="ECO:0000314"/>
    <property type="project" value="ARUK-UCL"/>
</dbReference>
<dbReference type="GO" id="GO:0008021">
    <property type="term" value="C:synaptic vesicle"/>
    <property type="evidence" value="ECO:0000314"/>
    <property type="project" value="ARUK-UCL"/>
</dbReference>
<dbReference type="GO" id="GO:0030672">
    <property type="term" value="C:synaptic vesicle membrane"/>
    <property type="evidence" value="ECO:0000314"/>
    <property type="project" value="UniProtKB"/>
</dbReference>
<dbReference type="GO" id="GO:0043195">
    <property type="term" value="C:terminal bouton"/>
    <property type="evidence" value="ECO:0000314"/>
    <property type="project" value="ARUK-UCL"/>
</dbReference>
<dbReference type="GO" id="GO:0015106">
    <property type="term" value="F:bicarbonate transmembrane transporter activity"/>
    <property type="evidence" value="ECO:0000266"/>
    <property type="project" value="RGD"/>
</dbReference>
<dbReference type="GO" id="GO:0015108">
    <property type="term" value="F:chloride transmembrane transporter activity"/>
    <property type="evidence" value="ECO:0000266"/>
    <property type="project" value="RGD"/>
</dbReference>
<dbReference type="GO" id="GO:0042802">
    <property type="term" value="F:identical protein binding"/>
    <property type="evidence" value="ECO:0000314"/>
    <property type="project" value="UniProtKB"/>
</dbReference>
<dbReference type="GO" id="GO:0015081">
    <property type="term" value="F:sodium ion transmembrane transporter activity"/>
    <property type="evidence" value="ECO:0000266"/>
    <property type="project" value="RGD"/>
</dbReference>
<dbReference type="GO" id="GO:0140892">
    <property type="term" value="F:sodium,bicarbonate:chloride antiporter activity"/>
    <property type="evidence" value="ECO:0000314"/>
    <property type="project" value="UniProtKB"/>
</dbReference>
<dbReference type="GO" id="GO:0008510">
    <property type="term" value="F:sodium:bicarbonate symporter activity"/>
    <property type="evidence" value="ECO:0000266"/>
    <property type="project" value="RGD"/>
</dbReference>
<dbReference type="GO" id="GO:0110010">
    <property type="term" value="P:basolateral protein secretion"/>
    <property type="evidence" value="ECO:0000314"/>
    <property type="project" value="UniProtKB"/>
</dbReference>
<dbReference type="GO" id="GO:0015701">
    <property type="term" value="P:bicarbonate transport"/>
    <property type="evidence" value="ECO:0000266"/>
    <property type="project" value="RGD"/>
</dbReference>
<dbReference type="GO" id="GO:1902476">
    <property type="term" value="P:chloride transmembrane transport"/>
    <property type="evidence" value="ECO:0000266"/>
    <property type="project" value="RGD"/>
</dbReference>
<dbReference type="GO" id="GO:0050804">
    <property type="term" value="P:modulation of chemical synaptic transmission"/>
    <property type="evidence" value="ECO:0000266"/>
    <property type="project" value="RGD"/>
</dbReference>
<dbReference type="GO" id="GO:2000302">
    <property type="term" value="P:positive regulation of synaptic vesicle exocytosis"/>
    <property type="evidence" value="ECO:0000266"/>
    <property type="project" value="RGD"/>
</dbReference>
<dbReference type="GO" id="GO:0051453">
    <property type="term" value="P:regulation of intracellular pH"/>
    <property type="evidence" value="ECO:0000314"/>
    <property type="project" value="UniProtKB"/>
</dbReference>
<dbReference type="GO" id="GO:0042391">
    <property type="term" value="P:regulation of membrane potential"/>
    <property type="evidence" value="ECO:0000266"/>
    <property type="project" value="RGD"/>
</dbReference>
<dbReference type="GO" id="GO:2000300">
    <property type="term" value="P:regulation of synaptic vesicle exocytosis"/>
    <property type="evidence" value="ECO:0000266"/>
    <property type="project" value="RGD"/>
</dbReference>
<dbReference type="GO" id="GO:0035725">
    <property type="term" value="P:sodium ion transmembrane transport"/>
    <property type="evidence" value="ECO:0000266"/>
    <property type="project" value="RGD"/>
</dbReference>
<dbReference type="GO" id="GO:0055085">
    <property type="term" value="P:transmembrane transport"/>
    <property type="evidence" value="ECO:0000318"/>
    <property type="project" value="GO_Central"/>
</dbReference>
<dbReference type="FunFam" id="1.10.287.570:FF:000001">
    <property type="entry name" value="Anion exchange protein"/>
    <property type="match status" value="1"/>
</dbReference>
<dbReference type="FunFam" id="3.40.930.10:FF:000001">
    <property type="entry name" value="Anion exchange protein"/>
    <property type="match status" value="1"/>
</dbReference>
<dbReference type="Gene3D" id="1.10.287.570">
    <property type="entry name" value="Helical hairpin bin"/>
    <property type="match status" value="1"/>
</dbReference>
<dbReference type="Gene3D" id="3.40.930.10">
    <property type="entry name" value="Mannitol-specific EII, Chain A"/>
    <property type="match status" value="1"/>
</dbReference>
<dbReference type="InterPro" id="IPR013769">
    <property type="entry name" value="Band3_cytoplasmic_dom"/>
</dbReference>
<dbReference type="InterPro" id="IPR011531">
    <property type="entry name" value="HCO3_transpt-like_TM_dom"/>
</dbReference>
<dbReference type="InterPro" id="IPR003020">
    <property type="entry name" value="HCO3_transpt_euk"/>
</dbReference>
<dbReference type="InterPro" id="IPR003024">
    <property type="entry name" value="Na/HCO3_transpt"/>
</dbReference>
<dbReference type="InterPro" id="IPR016152">
    <property type="entry name" value="PTrfase/Anion_transptr"/>
</dbReference>
<dbReference type="NCBIfam" id="TIGR00834">
    <property type="entry name" value="ae"/>
    <property type="match status" value="1"/>
</dbReference>
<dbReference type="PANTHER" id="PTHR11453">
    <property type="entry name" value="ANION EXCHANGE PROTEIN"/>
    <property type="match status" value="1"/>
</dbReference>
<dbReference type="PANTHER" id="PTHR11453:SF37">
    <property type="entry name" value="ELECTRONEUTRAL SODIUM BICARBONATE EXCHANGER 1"/>
    <property type="match status" value="1"/>
</dbReference>
<dbReference type="Pfam" id="PF07565">
    <property type="entry name" value="Band_3_cyto"/>
    <property type="match status" value="1"/>
</dbReference>
<dbReference type="Pfam" id="PF00955">
    <property type="entry name" value="HCO3_cotransp"/>
    <property type="match status" value="1"/>
</dbReference>
<dbReference type="PRINTS" id="PR01231">
    <property type="entry name" value="HCO3TRNSPORT"/>
</dbReference>
<dbReference type="PRINTS" id="PR01232">
    <property type="entry name" value="NAHCO3TRSPRT"/>
</dbReference>
<dbReference type="SUPFAM" id="SSF55804">
    <property type="entry name" value="Phoshotransferase/anion transport protein"/>
    <property type="match status" value="1"/>
</dbReference>
<keyword id="KW-0002">3D-structure</keyword>
<keyword id="KW-0025">Alternative splicing</keyword>
<keyword id="KW-0039">Anion exchange</keyword>
<keyword id="KW-0050">Antiport</keyword>
<keyword id="KW-1003">Cell membrane</keyword>
<keyword id="KW-0968">Cytoplasmic vesicle</keyword>
<keyword id="KW-1015">Disulfide bond</keyword>
<keyword id="KW-0325">Glycoprotein</keyword>
<keyword id="KW-0406">Ion transport</keyword>
<keyword id="KW-0472">Membrane</keyword>
<keyword id="KW-1185">Reference proteome</keyword>
<keyword id="KW-0915">Sodium</keyword>
<keyword id="KW-0739">Sodium transport</keyword>
<keyword id="KW-0770">Synapse</keyword>
<keyword id="KW-0812">Transmembrane</keyword>
<keyword id="KW-1133">Transmembrane helix</keyword>
<keyword id="KW-0813">Transport</keyword>
<name>S4A8_RAT</name>
<organism>
    <name type="scientific">Rattus norvegicus</name>
    <name type="common">Rat</name>
    <dbReference type="NCBI Taxonomy" id="10116"/>
    <lineage>
        <taxon>Eukaryota</taxon>
        <taxon>Metazoa</taxon>
        <taxon>Chordata</taxon>
        <taxon>Craniata</taxon>
        <taxon>Vertebrata</taxon>
        <taxon>Euteleostomi</taxon>
        <taxon>Mammalia</taxon>
        <taxon>Eutheria</taxon>
        <taxon>Euarchontoglires</taxon>
        <taxon>Glires</taxon>
        <taxon>Rodentia</taxon>
        <taxon>Myomorpha</taxon>
        <taxon>Muroidea</taxon>
        <taxon>Muridae</taxon>
        <taxon>Murinae</taxon>
        <taxon>Rattus</taxon>
    </lineage>
</organism>
<protein>
    <recommendedName>
        <fullName>Electroneutral sodium bicarbonate exchanger 1</fullName>
    </recommendedName>
    <alternativeName>
        <fullName>Electroneutral Na+-driven Cl-HCO3 exchanger</fullName>
    </alternativeName>
    <alternativeName>
        <fullName>Solute carrier family 4 member 8</fullName>
    </alternativeName>
    <alternativeName>
        <fullName>k-NBC3</fullName>
    </alternativeName>
</protein>
<feature type="chain" id="PRO_0000328924" description="Electroneutral sodium bicarbonate exchanger 1">
    <location>
        <begin position="1"/>
        <end position="1092"/>
    </location>
</feature>
<feature type="topological domain" description="Extracellular" evidence="3">
    <location>
        <begin position="1"/>
        <end position="478"/>
    </location>
</feature>
<feature type="transmembrane region" description="Helical" evidence="3">
    <location>
        <begin position="479"/>
        <end position="499"/>
    </location>
</feature>
<feature type="topological domain" description="Cytoplasmic" evidence="3">
    <location>
        <begin position="500"/>
        <end position="507"/>
    </location>
</feature>
<feature type="transmembrane region" description="Helical" evidence="3">
    <location>
        <begin position="508"/>
        <end position="528"/>
    </location>
</feature>
<feature type="topological domain" description="Extracellular" evidence="3">
    <location>
        <begin position="529"/>
        <end position="565"/>
    </location>
</feature>
<feature type="transmembrane region" description="Helical" evidence="3">
    <location>
        <begin position="566"/>
        <end position="586"/>
    </location>
</feature>
<feature type="topological domain" description="Cytoplasmic" evidence="3">
    <location>
        <begin position="587"/>
        <end position="595"/>
    </location>
</feature>
<feature type="transmembrane region" description="Helical" evidence="3">
    <location>
        <begin position="596"/>
        <end position="616"/>
    </location>
</feature>
<feature type="topological domain" description="Extracellular" evidence="3">
    <location>
        <begin position="617"/>
        <end position="687"/>
    </location>
</feature>
<feature type="transmembrane region" description="Helical" evidence="3">
    <location>
        <begin position="688"/>
        <end position="708"/>
    </location>
</feature>
<feature type="topological domain" description="Cytoplasmic" evidence="3">
    <location>
        <begin position="709"/>
        <end position="731"/>
    </location>
</feature>
<feature type="transmembrane region" description="Helical" evidence="3">
    <location>
        <begin position="732"/>
        <end position="752"/>
    </location>
</feature>
<feature type="topological domain" description="Extracellular" evidence="3">
    <location>
        <begin position="753"/>
        <end position="778"/>
    </location>
</feature>
<feature type="transmembrane region" description="Helical" evidence="3">
    <location>
        <begin position="779"/>
        <end position="799"/>
    </location>
</feature>
<feature type="topological domain" description="Cytoplasmic" evidence="3">
    <location>
        <begin position="800"/>
        <end position="824"/>
    </location>
</feature>
<feature type="transmembrane region" description="Helical" evidence="3">
    <location>
        <begin position="825"/>
        <end position="845"/>
    </location>
</feature>
<feature type="topological domain" description="Extracellular" evidence="3">
    <location>
        <begin position="846"/>
        <end position="881"/>
    </location>
</feature>
<feature type="transmembrane region" description="Helical" evidence="3">
    <location>
        <begin position="882"/>
        <end position="902"/>
    </location>
</feature>
<feature type="topological domain" description="Cytoplasmic" evidence="3">
    <location>
        <begin position="903"/>
        <end position="904"/>
    </location>
</feature>
<feature type="transmembrane region" description="Helical" evidence="3">
    <location>
        <begin position="905"/>
        <end position="925"/>
    </location>
</feature>
<feature type="topological domain" description="Extracellular" evidence="3">
    <location>
        <begin position="926"/>
        <end position="962"/>
    </location>
</feature>
<feature type="transmembrane region" description="Helical" evidence="3">
    <location>
        <begin position="963"/>
        <end position="983"/>
    </location>
</feature>
<feature type="topological domain" description="Cytoplasmic" evidence="3">
    <location>
        <begin position="984"/>
        <end position="1092"/>
    </location>
</feature>
<feature type="region of interest" description="Disordered" evidence="4">
    <location>
        <begin position="1"/>
        <end position="26"/>
    </location>
</feature>
<feature type="region of interest" description="Disordered" evidence="4">
    <location>
        <begin position="55"/>
        <end position="95"/>
    </location>
</feature>
<feature type="region of interest" description="Disordered" evidence="4">
    <location>
        <begin position="243"/>
        <end position="263"/>
    </location>
</feature>
<feature type="compositionally biased region" description="Basic residues" evidence="4">
    <location>
        <begin position="58"/>
        <end position="76"/>
    </location>
</feature>
<feature type="compositionally biased region" description="Basic and acidic residues" evidence="4">
    <location>
        <begin position="243"/>
        <end position="255"/>
    </location>
</feature>
<feature type="glycosylation site" description="N-linked (GlcNAc) asparagine" evidence="13">
    <location>
        <position position="646"/>
    </location>
</feature>
<feature type="glycosylation site" description="N-linked (GlcNAc) asparagine" evidence="13">
    <location>
        <position position="666"/>
    </location>
</feature>
<feature type="disulfide bond" evidence="9 16">
    <location>
        <begin position="636"/>
        <end position="684"/>
    </location>
</feature>
<feature type="disulfide bond" evidence="9 16">
    <location>
        <begin position="638"/>
        <end position="672"/>
    </location>
</feature>
<feature type="splice variant" id="VSP_061719" description="In isoform 2 and isoform 4." evidence="11">
    <location>
        <begin position="452"/>
        <end position="476"/>
    </location>
</feature>
<feature type="splice variant" id="VSP_061720" description="In isoform 3 and isoform 4." evidence="11">
    <location>
        <begin position="671"/>
        <end position="724"/>
    </location>
</feature>
<feature type="splice variant" id="VSP_061721" description="In isoform 3." evidence="11">
    <location>
        <position position="1027"/>
    </location>
</feature>
<feature type="mutagenesis site" description="60% of wild-type transporter activity. No effect on cell membrane localization." evidence="9">
    <original>P</original>
    <variation>C</variation>
    <location>
        <position position="492"/>
    </location>
</feature>
<feature type="mutagenesis site" description="40% of wild-type transporter activity. No effect on cell membrane localization." evidence="9">
    <original>F</original>
    <variation>C</variation>
    <location>
        <position position="496"/>
    </location>
</feature>
<feature type="mutagenesis site" description="20% of wild-type transporter activity. No effect on cell membrane localization." evidence="9">
    <original>G</original>
    <variation>C</variation>
    <location>
        <position position="536"/>
    </location>
</feature>
<feature type="mutagenesis site" description="60% of wild-type transporter activity. No effect on cell membrane localization." evidence="9">
    <original>T</original>
    <variation>C</variation>
    <location>
        <position position="538"/>
    </location>
</feature>
<feature type="mutagenesis site" description="40% of wild-type transporter activity. No effect on cell membrane localization." evidence="9">
    <original>G</original>
    <variation>C</variation>
    <location>
        <position position="539"/>
    </location>
</feature>
<feature type="mutagenesis site" description="40% of wild-type transporter activity. No effect on cell membrane localization." evidence="9">
    <original>P</original>
    <variation>C</variation>
    <location>
        <position position="540"/>
    </location>
</feature>
<feature type="mutagenesis site" description="40% of wild-type transporter activity. No effect on cell membrane localization." evidence="9">
    <original>E</original>
    <variation>C</variation>
    <location>
        <position position="608"/>
    </location>
</feature>
<feature type="mutagenesis site" description="40% of wild-type transporter activity. No effect on cell membrane localization." evidence="9">
    <original>K</original>
    <variation>C</variation>
    <location>
        <position position="612"/>
    </location>
</feature>
<feature type="mutagenesis site" description="40% of wild-type transporter activity. No effect on cell membrane localization." evidence="9">
    <original>D</original>
    <variation>C</variation>
    <location>
        <position position="800"/>
    </location>
</feature>
<feature type="mutagenesis site" description="20% of wild-type transporter activity. No effect on cell membrane localization." evidence="9">
    <original>T</original>
    <variation>C</variation>
    <location>
        <position position="804"/>
    </location>
</feature>
<feature type="mutagenesis site" description="40% of wild-type transporter activity. No effect on cell membrane localization." evidence="9">
    <original>A</original>
    <variation>C</variation>
    <location>
        <position position="845"/>
    </location>
</feature>
<feature type="mutagenesis site" description="40% of wild-type transporter activity. No effect on cell membrane localization." evidence="9">
    <original>A</original>
    <variation>C</variation>
    <location>
        <position position="846"/>
    </location>
</feature>
<feature type="mutagenesis site" description="60% of wild-type transporter activity. No effect on cell membrane localization." evidence="9">
    <original>T</original>
    <variation>C</variation>
    <location>
        <position position="847"/>
    </location>
</feature>
<feature type="mutagenesis site" description="40% of wild-type transporter activity. No effect on cell membrane localization." evidence="9">
    <original>V</original>
    <variation>C</variation>
    <location>
        <position position="848"/>
    </location>
</feature>
<feature type="mutagenesis site" description="40% of wild-type transporter activity. No effect on cell membrane localization." evidence="9">
    <original>T</original>
    <variation>C</variation>
    <location>
        <position position="852"/>
    </location>
</feature>
<feature type="mutagenesis site" description="60% of wild-type transporter activity. No effect on cell membrane localization." evidence="9">
    <original>R</original>
    <variation>C</variation>
    <location>
        <position position="879"/>
    </location>
</feature>
<feature type="mutagenesis site" description="40% of wild-type transporter activity. No effect on cell membrane localization." evidence="9">
    <original>M</original>
    <variation>C</variation>
    <location>
        <position position="914"/>
    </location>
</feature>
<feature type="mutagenesis site" description="60% of wild-type transporter activity. No effect on cell membrane localization." evidence="9">
    <original>K</original>
    <variation>C</variation>
    <location>
        <position position="970"/>
    </location>
</feature>
<feature type="helix" evidence="17">
    <location>
        <begin position="456"/>
        <end position="460"/>
    </location>
</feature>
<feature type="turn" evidence="17">
    <location>
        <begin position="464"/>
        <end position="467"/>
    </location>
</feature>
<feature type="helix" evidence="17">
    <location>
        <begin position="468"/>
        <end position="471"/>
    </location>
</feature>
<feature type="helix" evidence="17">
    <location>
        <begin position="479"/>
        <end position="490"/>
    </location>
</feature>
<feature type="turn" evidence="17">
    <location>
        <begin position="491"/>
        <end position="494"/>
    </location>
</feature>
<feature type="helix" evidence="17">
    <location>
        <begin position="495"/>
        <end position="503"/>
    </location>
</feature>
<feature type="strand" evidence="17">
    <location>
        <begin position="506"/>
        <end position="508"/>
    </location>
</feature>
<feature type="helix" evidence="17">
    <location>
        <begin position="510"/>
        <end position="527"/>
    </location>
</feature>
<feature type="helix" evidence="17">
    <location>
        <begin position="539"/>
        <end position="551"/>
    </location>
</feature>
<feature type="helix" evidence="17">
    <location>
        <begin position="559"/>
        <end position="580"/>
    </location>
</feature>
<feature type="helix" evidence="17">
    <location>
        <begin position="584"/>
        <end position="588"/>
    </location>
</feature>
<feature type="helix" evidence="17">
    <location>
        <begin position="591"/>
        <end position="619"/>
    </location>
</feature>
<feature type="helix" evidence="17">
    <location>
        <begin position="628"/>
        <end position="633"/>
    </location>
</feature>
<feature type="strand" evidence="17">
    <location>
        <begin position="636"/>
        <end position="639"/>
    </location>
</feature>
<feature type="helix" evidence="17">
    <location>
        <begin position="646"/>
        <end position="654"/>
    </location>
</feature>
<feature type="helix" evidence="17">
    <location>
        <begin position="660"/>
        <end position="662"/>
    </location>
</feature>
<feature type="turn" evidence="17">
    <location>
        <begin position="663"/>
        <end position="665"/>
    </location>
</feature>
<feature type="helix" evidence="17">
    <location>
        <begin position="669"/>
        <end position="674"/>
    </location>
</feature>
<feature type="strand" evidence="17">
    <location>
        <begin position="678"/>
        <end position="683"/>
    </location>
</feature>
<feature type="strand" evidence="17">
    <location>
        <begin position="685"/>
        <end position="688"/>
    </location>
</feature>
<feature type="helix" evidence="17">
    <location>
        <begin position="694"/>
        <end position="713"/>
    </location>
</feature>
<feature type="helix" evidence="17">
    <location>
        <begin position="714"/>
        <end position="717"/>
    </location>
</feature>
<feature type="helix" evidence="17">
    <location>
        <begin position="723"/>
        <end position="731"/>
    </location>
</feature>
<feature type="helix" evidence="17">
    <location>
        <begin position="733"/>
        <end position="747"/>
    </location>
</feature>
<feature type="helix" evidence="17">
    <location>
        <begin position="780"/>
        <end position="785"/>
    </location>
</feature>
<feature type="helix" evidence="17">
    <location>
        <begin position="787"/>
        <end position="808"/>
    </location>
</feature>
<feature type="strand" evidence="17">
    <location>
        <begin position="811"/>
        <end position="813"/>
    </location>
</feature>
<feature type="helix" evidence="17">
    <location>
        <begin position="821"/>
        <end position="837"/>
    </location>
</feature>
<feature type="helix" evidence="17">
    <location>
        <begin position="847"/>
        <end position="856"/>
    </location>
</feature>
<feature type="strand" evidence="17">
    <location>
        <begin position="862"/>
        <end position="864"/>
    </location>
</feature>
<feature type="strand" evidence="17">
    <location>
        <begin position="866"/>
        <end position="868"/>
    </location>
</feature>
<feature type="helix" evidence="17">
    <location>
        <begin position="881"/>
        <end position="891"/>
    </location>
</feature>
<feature type="turn" evidence="17">
    <location>
        <begin position="897"/>
        <end position="901"/>
    </location>
</feature>
<feature type="helix" evidence="17">
    <location>
        <begin position="904"/>
        <end position="918"/>
    </location>
</feature>
<feature type="helix" evidence="17">
    <location>
        <begin position="923"/>
        <end position="928"/>
    </location>
</feature>
<feature type="strand" evidence="17">
    <location>
        <begin position="931"/>
        <end position="933"/>
    </location>
</feature>
<feature type="strand" evidence="17">
    <location>
        <begin position="935"/>
        <end position="937"/>
    </location>
</feature>
<feature type="helix" evidence="17">
    <location>
        <begin position="943"/>
        <end position="946"/>
    </location>
</feature>
<feature type="helix" evidence="17">
    <location>
        <begin position="949"/>
        <end position="970"/>
    </location>
</feature>
<feature type="turn" evidence="17">
    <location>
        <begin position="976"/>
        <end position="980"/>
    </location>
</feature>
<feature type="helix" evidence="17">
    <location>
        <begin position="981"/>
        <end position="995"/>
    </location>
</feature>
<feature type="helix" evidence="17">
    <location>
        <begin position="999"/>
        <end position="1001"/>
    </location>
</feature>
<feature type="turn" evidence="17">
    <location>
        <begin position="1002"/>
        <end position="1004"/>
    </location>
</feature>
<feature type="helix" evidence="17">
    <location>
        <begin position="1010"/>
        <end position="1018"/>
    </location>
</feature>
<accession>Q6RVG2</accession>
<accession>F1LUB7</accession>
<accession>Q6RVG1</accession>
<accession>Q6RVG3</accession>
<sequence>MPAGSNEPDGVLSYQRPDEEAVVDQGGTSTILNIHYEKEELEGHRTLYVGVRMPLGRQSHRHHRTHGQKHRRRGGRGKGASQGEEGLEASAHDTPSQRVQFILGTEEDEEHVPHELFTELDEICMKEGEEAEWKETARWLKFEEDVEDGGERWSKPYVATLSLHSLFELRSCLINGSVLLDMRASSIEEISDLILDQQELLRDLSDSVRVKVREALLKKHHHQNEKKRNNLIPIVRSFAEVGKKQSDPHSMDRDGQTVSPQSAPATNLEVKNGVNCEHSPVDLSKADLHFMKKIPAGAEASNVLVGEVDTLDRPIVAFVRLSPAVLLSGLTEVPIPTRFLFILLGPVGKGQQYHEIGRSMATIMTDEIFHDVAYKAKERDDLLAGIDEFLDQVTVLPPGEWDPSIRIEPPKNVPSQEKRKMPGVPNGNICHVEPEPHGGHSGPELERTGRLFGGLVLDVKRKAPWYWSDYRDALSLQCLASFLFLYCACMSPVITFGGLLGEATEGRISAIESLFGASMTGIAYSLFAGQPLTILGSTGPVLVFEKILFKFCKDYALSYLSLRACIGLWTAFLCIVLVATDASSLVCYITRFTEEAFASLICIIFIYEAIEKLIHLAETYPIHMHSQLDHLSLYYCRCALPENPNNHTLQYWKEHSIPTADVNWANLTVSECQEMHGEFIGSACGHHGPYTPDVLFWSCILFFATFIVSSTLKTFKTSRYFPTRVRSTVSDFAVFLTIFTMVILDFLIGVPSPKLQVPSVFKPTRDDRGWFISPIGPNPWWTVIAAIIPALLCTILIFMDQQITAVIINRKEHKLKKGCGYHLDLLVVAIMLGVCSLMGLPWFVAATVLSITHVNSLKLESECSAPGEQPKFLGIREQRVTGLMIFVLMGCSVFMTAVLKFIPMPVLYGVFLYMGVSSLQGIQFFDRLKLFGMPAKHQPDFIYLRHVPLRKVHLFTLVQLTCLVLLWVIKASPAAIVFPMMVLALVFVRKVMDLCFSKRELSWLDDLMPESKKKKLDDAKKKEEEEEAEKMLDIGGDKFPLESRKLLSSPGKNNSFRCDPSEINISDEMPKTTVWKALSINSGNTKEKSPFN</sequence>
<gene>
    <name evidence="15" type="primary">Slc4a8</name>
    <name type="synonym">Ndcbe1</name>
</gene>